<evidence type="ECO:0000255" key="1">
    <source>
        <dbReference type="HAMAP-Rule" id="MF_00097"/>
    </source>
</evidence>
<accession>Q3K1L6</accession>
<protein>
    <recommendedName>
        <fullName evidence="1">Thiamine-phosphate synthase</fullName>
        <shortName evidence="1">TP synthase</shortName>
        <shortName evidence="1">TPS</shortName>
        <ecNumber evidence="1">2.5.1.3</ecNumber>
    </recommendedName>
    <alternativeName>
        <fullName evidence="1">Thiamine-phosphate pyrophosphorylase</fullName>
        <shortName evidence="1">TMP pyrophosphorylase</shortName>
        <shortName evidence="1">TMP-PPase</shortName>
    </alternativeName>
</protein>
<keyword id="KW-0460">Magnesium</keyword>
<keyword id="KW-0479">Metal-binding</keyword>
<keyword id="KW-0784">Thiamine biosynthesis</keyword>
<keyword id="KW-0808">Transferase</keyword>
<organism>
    <name type="scientific">Streptococcus agalactiae serotype Ia (strain ATCC 27591 / A909 / CDC SS700)</name>
    <dbReference type="NCBI Taxonomy" id="205921"/>
    <lineage>
        <taxon>Bacteria</taxon>
        <taxon>Bacillati</taxon>
        <taxon>Bacillota</taxon>
        <taxon>Bacilli</taxon>
        <taxon>Lactobacillales</taxon>
        <taxon>Streptococcaceae</taxon>
        <taxon>Streptococcus</taxon>
    </lineage>
</organism>
<name>THIE_STRA1</name>
<gene>
    <name evidence="1" type="primary">thiE</name>
    <name type="ordered locus">SAK_0965</name>
</gene>
<comment type="function">
    <text evidence="1">Condenses 4-methyl-5-(beta-hydroxyethyl)thiazole monophosphate (THZ-P) and 2-methyl-4-amino-5-hydroxymethyl pyrimidine pyrophosphate (HMP-PP) to form thiamine monophosphate (TMP).</text>
</comment>
<comment type="catalytic activity">
    <reaction evidence="1">
        <text>2-[(2R,5Z)-2-carboxy-4-methylthiazol-5(2H)-ylidene]ethyl phosphate + 4-amino-2-methyl-5-(diphosphooxymethyl)pyrimidine + 2 H(+) = thiamine phosphate + CO2 + diphosphate</text>
        <dbReference type="Rhea" id="RHEA:47844"/>
        <dbReference type="ChEBI" id="CHEBI:15378"/>
        <dbReference type="ChEBI" id="CHEBI:16526"/>
        <dbReference type="ChEBI" id="CHEBI:33019"/>
        <dbReference type="ChEBI" id="CHEBI:37575"/>
        <dbReference type="ChEBI" id="CHEBI:57841"/>
        <dbReference type="ChEBI" id="CHEBI:62899"/>
        <dbReference type="EC" id="2.5.1.3"/>
    </reaction>
</comment>
<comment type="catalytic activity">
    <reaction evidence="1">
        <text>2-(2-carboxy-4-methylthiazol-5-yl)ethyl phosphate + 4-amino-2-methyl-5-(diphosphooxymethyl)pyrimidine + 2 H(+) = thiamine phosphate + CO2 + diphosphate</text>
        <dbReference type="Rhea" id="RHEA:47848"/>
        <dbReference type="ChEBI" id="CHEBI:15378"/>
        <dbReference type="ChEBI" id="CHEBI:16526"/>
        <dbReference type="ChEBI" id="CHEBI:33019"/>
        <dbReference type="ChEBI" id="CHEBI:37575"/>
        <dbReference type="ChEBI" id="CHEBI:57841"/>
        <dbReference type="ChEBI" id="CHEBI:62890"/>
        <dbReference type="EC" id="2.5.1.3"/>
    </reaction>
</comment>
<comment type="catalytic activity">
    <reaction evidence="1">
        <text>4-methyl-5-(2-phosphooxyethyl)-thiazole + 4-amino-2-methyl-5-(diphosphooxymethyl)pyrimidine + H(+) = thiamine phosphate + diphosphate</text>
        <dbReference type="Rhea" id="RHEA:22328"/>
        <dbReference type="ChEBI" id="CHEBI:15378"/>
        <dbReference type="ChEBI" id="CHEBI:33019"/>
        <dbReference type="ChEBI" id="CHEBI:37575"/>
        <dbReference type="ChEBI" id="CHEBI:57841"/>
        <dbReference type="ChEBI" id="CHEBI:58296"/>
        <dbReference type="EC" id="2.5.1.3"/>
    </reaction>
</comment>
<comment type="cofactor">
    <cofactor evidence="1">
        <name>Mg(2+)</name>
        <dbReference type="ChEBI" id="CHEBI:18420"/>
    </cofactor>
    <text evidence="1">Binds 1 Mg(2+) ion per subunit.</text>
</comment>
<comment type="pathway">
    <text evidence="1">Cofactor biosynthesis; thiamine diphosphate biosynthesis; thiamine phosphate from 4-amino-2-methyl-5-diphosphomethylpyrimidine and 4-methyl-5-(2-phosphoethyl)-thiazole: step 1/1.</text>
</comment>
<comment type="similarity">
    <text evidence="1">Belongs to the thiamine-phosphate synthase family.</text>
</comment>
<reference key="1">
    <citation type="journal article" date="2005" name="Proc. Natl. Acad. Sci. U.S.A.">
        <title>Genome analysis of multiple pathogenic isolates of Streptococcus agalactiae: implications for the microbial 'pan-genome'.</title>
        <authorList>
            <person name="Tettelin H."/>
            <person name="Masignani V."/>
            <person name="Cieslewicz M.J."/>
            <person name="Donati C."/>
            <person name="Medini D."/>
            <person name="Ward N.L."/>
            <person name="Angiuoli S.V."/>
            <person name="Crabtree J."/>
            <person name="Jones A.L."/>
            <person name="Durkin A.S."/>
            <person name="DeBoy R.T."/>
            <person name="Davidsen T.M."/>
            <person name="Mora M."/>
            <person name="Scarselli M."/>
            <person name="Margarit y Ros I."/>
            <person name="Peterson J.D."/>
            <person name="Hauser C.R."/>
            <person name="Sundaram J.P."/>
            <person name="Nelson W.C."/>
            <person name="Madupu R."/>
            <person name="Brinkac L.M."/>
            <person name="Dodson R.J."/>
            <person name="Rosovitz M.J."/>
            <person name="Sullivan S.A."/>
            <person name="Daugherty S.C."/>
            <person name="Haft D.H."/>
            <person name="Selengut J."/>
            <person name="Gwinn M.L."/>
            <person name="Zhou L."/>
            <person name="Zafar N."/>
            <person name="Khouri H."/>
            <person name="Radune D."/>
            <person name="Dimitrov G."/>
            <person name="Watkins K."/>
            <person name="O'Connor K.J."/>
            <person name="Smith S."/>
            <person name="Utterback T.R."/>
            <person name="White O."/>
            <person name="Rubens C.E."/>
            <person name="Grandi G."/>
            <person name="Madoff L.C."/>
            <person name="Kasper D.L."/>
            <person name="Telford J.L."/>
            <person name="Wessels M.R."/>
            <person name="Rappuoli R."/>
            <person name="Fraser C.M."/>
        </authorList>
    </citation>
    <scope>NUCLEOTIDE SEQUENCE [LARGE SCALE GENOMIC DNA]</scope>
    <source>
        <strain>ATCC 27591 / A909 / CDC SS700</strain>
    </source>
</reference>
<proteinExistence type="inferred from homology"/>
<dbReference type="EC" id="2.5.1.3" evidence="1"/>
<dbReference type="EMBL" id="CP000114">
    <property type="protein sequence ID" value="ABA44825.1"/>
    <property type="molecule type" value="Genomic_DNA"/>
</dbReference>
<dbReference type="RefSeq" id="WP_000655661.1">
    <property type="nucleotide sequence ID" value="NC_007432.1"/>
</dbReference>
<dbReference type="SMR" id="Q3K1L6"/>
<dbReference type="KEGG" id="sak:SAK_0965"/>
<dbReference type="HOGENOM" id="CLU_018272_3_2_9"/>
<dbReference type="UniPathway" id="UPA00060">
    <property type="reaction ID" value="UER00141"/>
</dbReference>
<dbReference type="GO" id="GO:0005737">
    <property type="term" value="C:cytoplasm"/>
    <property type="evidence" value="ECO:0007669"/>
    <property type="project" value="TreeGrafter"/>
</dbReference>
<dbReference type="GO" id="GO:0000287">
    <property type="term" value="F:magnesium ion binding"/>
    <property type="evidence" value="ECO:0007669"/>
    <property type="project" value="UniProtKB-UniRule"/>
</dbReference>
<dbReference type="GO" id="GO:0004789">
    <property type="term" value="F:thiamine-phosphate diphosphorylase activity"/>
    <property type="evidence" value="ECO:0007669"/>
    <property type="project" value="UniProtKB-UniRule"/>
</dbReference>
<dbReference type="GO" id="GO:0009228">
    <property type="term" value="P:thiamine biosynthetic process"/>
    <property type="evidence" value="ECO:0007669"/>
    <property type="project" value="UniProtKB-KW"/>
</dbReference>
<dbReference type="GO" id="GO:0009229">
    <property type="term" value="P:thiamine diphosphate biosynthetic process"/>
    <property type="evidence" value="ECO:0007669"/>
    <property type="project" value="UniProtKB-UniRule"/>
</dbReference>
<dbReference type="CDD" id="cd00564">
    <property type="entry name" value="TMP_TenI"/>
    <property type="match status" value="1"/>
</dbReference>
<dbReference type="FunFam" id="3.20.20.70:FF:000096">
    <property type="entry name" value="Thiamine-phosphate synthase"/>
    <property type="match status" value="1"/>
</dbReference>
<dbReference type="Gene3D" id="3.20.20.70">
    <property type="entry name" value="Aldolase class I"/>
    <property type="match status" value="1"/>
</dbReference>
<dbReference type="HAMAP" id="MF_00097">
    <property type="entry name" value="TMP_synthase"/>
    <property type="match status" value="1"/>
</dbReference>
<dbReference type="InterPro" id="IPR013785">
    <property type="entry name" value="Aldolase_TIM"/>
</dbReference>
<dbReference type="InterPro" id="IPR036206">
    <property type="entry name" value="ThiamineP_synth_sf"/>
</dbReference>
<dbReference type="InterPro" id="IPR022998">
    <property type="entry name" value="ThiamineP_synth_TenI"/>
</dbReference>
<dbReference type="InterPro" id="IPR034291">
    <property type="entry name" value="TMP_synthase"/>
</dbReference>
<dbReference type="NCBIfam" id="TIGR00693">
    <property type="entry name" value="thiE"/>
    <property type="match status" value="1"/>
</dbReference>
<dbReference type="PANTHER" id="PTHR20857">
    <property type="entry name" value="THIAMINE-PHOSPHATE PYROPHOSPHORYLASE"/>
    <property type="match status" value="1"/>
</dbReference>
<dbReference type="PANTHER" id="PTHR20857:SF15">
    <property type="entry name" value="THIAMINE-PHOSPHATE SYNTHASE"/>
    <property type="match status" value="1"/>
</dbReference>
<dbReference type="Pfam" id="PF02581">
    <property type="entry name" value="TMP-TENI"/>
    <property type="match status" value="1"/>
</dbReference>
<dbReference type="SUPFAM" id="SSF51391">
    <property type="entry name" value="Thiamin phosphate synthase"/>
    <property type="match status" value="1"/>
</dbReference>
<feature type="chain" id="PRO_1000008180" description="Thiamine-phosphate synthase">
    <location>
        <begin position="1"/>
        <end position="223"/>
    </location>
</feature>
<feature type="binding site" evidence="1">
    <location>
        <begin position="37"/>
        <end position="41"/>
    </location>
    <ligand>
        <name>4-amino-2-methyl-5-(diphosphooxymethyl)pyrimidine</name>
        <dbReference type="ChEBI" id="CHEBI:57841"/>
    </ligand>
</feature>
<feature type="binding site" evidence="1">
    <location>
        <position position="72"/>
    </location>
    <ligand>
        <name>4-amino-2-methyl-5-(diphosphooxymethyl)pyrimidine</name>
        <dbReference type="ChEBI" id="CHEBI:57841"/>
    </ligand>
</feature>
<feature type="binding site" evidence="1">
    <location>
        <position position="73"/>
    </location>
    <ligand>
        <name>Mg(2+)</name>
        <dbReference type="ChEBI" id="CHEBI:18420"/>
    </ligand>
</feature>
<feature type="binding site" evidence="1">
    <location>
        <position position="92"/>
    </location>
    <ligand>
        <name>Mg(2+)</name>
        <dbReference type="ChEBI" id="CHEBI:18420"/>
    </ligand>
</feature>
<feature type="binding site" evidence="1">
    <location>
        <position position="110"/>
    </location>
    <ligand>
        <name>4-amino-2-methyl-5-(diphosphooxymethyl)pyrimidine</name>
        <dbReference type="ChEBI" id="CHEBI:57841"/>
    </ligand>
</feature>
<feature type="binding site" evidence="1">
    <location>
        <begin position="136"/>
        <end position="138"/>
    </location>
    <ligand>
        <name>2-[(2R,5Z)-2-carboxy-4-methylthiazol-5(2H)-ylidene]ethyl phosphate</name>
        <dbReference type="ChEBI" id="CHEBI:62899"/>
    </ligand>
</feature>
<feature type="binding site" evidence="1">
    <location>
        <position position="139"/>
    </location>
    <ligand>
        <name>4-amino-2-methyl-5-(diphosphooxymethyl)pyrimidine</name>
        <dbReference type="ChEBI" id="CHEBI:57841"/>
    </ligand>
</feature>
<feature type="binding site" evidence="1">
    <location>
        <position position="168"/>
    </location>
    <ligand>
        <name>2-[(2R,5Z)-2-carboxy-4-methylthiazol-5(2H)-ylidene]ethyl phosphate</name>
        <dbReference type="ChEBI" id="CHEBI:62899"/>
    </ligand>
</feature>
<feature type="binding site" evidence="1">
    <location>
        <begin position="188"/>
        <end position="189"/>
    </location>
    <ligand>
        <name>2-[(2R,5Z)-2-carboxy-4-methylthiazol-5(2H)-ylidene]ethyl phosphate</name>
        <dbReference type="ChEBI" id="CHEBI:62899"/>
    </ligand>
</feature>
<sequence>MKDTLKLYFVCGTVDCSRKNILTVVEEALQAGITLFQFREKGFTALQGKEKIAMAKQLQILCKQYQVPFIIDDDIDLVELIDADGLHIGQNDLPVDEARRRLPDKIIGLSVSTMDEYQKSQLSVVDYIGIGPFNPTQSKADAKPAVGNRTTKAVREINQDIPIVAIGGITSDFVHDIIESGADGIAVISAISKANHIVDATRQLRYEVEKALVNRQKHSDVIK</sequence>